<name>MNMG_XYLFA</name>
<evidence type="ECO:0000255" key="1">
    <source>
        <dbReference type="HAMAP-Rule" id="MF_00129"/>
    </source>
</evidence>
<gene>
    <name evidence="1" type="primary">mnmG</name>
    <name evidence="1" type="synonym">gidA</name>
    <name type="ordered locus">XF_2106</name>
</gene>
<keyword id="KW-0963">Cytoplasm</keyword>
<keyword id="KW-0274">FAD</keyword>
<keyword id="KW-0285">Flavoprotein</keyword>
<keyword id="KW-0520">NAD</keyword>
<keyword id="KW-0819">tRNA processing</keyword>
<organism>
    <name type="scientific">Xylella fastidiosa (strain 9a5c)</name>
    <dbReference type="NCBI Taxonomy" id="160492"/>
    <lineage>
        <taxon>Bacteria</taxon>
        <taxon>Pseudomonadati</taxon>
        <taxon>Pseudomonadota</taxon>
        <taxon>Gammaproteobacteria</taxon>
        <taxon>Lysobacterales</taxon>
        <taxon>Lysobacteraceae</taxon>
        <taxon>Xylella</taxon>
    </lineage>
</organism>
<reference key="1">
    <citation type="journal article" date="2000" name="Nature">
        <title>The genome sequence of the plant pathogen Xylella fastidiosa.</title>
        <authorList>
            <person name="Simpson A.J.G."/>
            <person name="Reinach F.C."/>
            <person name="Arruda P."/>
            <person name="Abreu F.A."/>
            <person name="Acencio M."/>
            <person name="Alvarenga R."/>
            <person name="Alves L.M.C."/>
            <person name="Araya J.E."/>
            <person name="Baia G.S."/>
            <person name="Baptista C.S."/>
            <person name="Barros M.H."/>
            <person name="Bonaccorsi E.D."/>
            <person name="Bordin S."/>
            <person name="Bove J.M."/>
            <person name="Briones M.R.S."/>
            <person name="Bueno M.R.P."/>
            <person name="Camargo A.A."/>
            <person name="Camargo L.E.A."/>
            <person name="Carraro D.M."/>
            <person name="Carrer H."/>
            <person name="Colauto N.B."/>
            <person name="Colombo C."/>
            <person name="Costa F.F."/>
            <person name="Costa M.C.R."/>
            <person name="Costa-Neto C.M."/>
            <person name="Coutinho L.L."/>
            <person name="Cristofani M."/>
            <person name="Dias-Neto E."/>
            <person name="Docena C."/>
            <person name="El-Dorry H."/>
            <person name="Facincani A.P."/>
            <person name="Ferreira A.J.S."/>
            <person name="Ferreira V.C.A."/>
            <person name="Ferro J.A."/>
            <person name="Fraga J.S."/>
            <person name="Franca S.C."/>
            <person name="Franco M.C."/>
            <person name="Frohme M."/>
            <person name="Furlan L.R."/>
            <person name="Garnier M."/>
            <person name="Goldman G.H."/>
            <person name="Goldman M.H.S."/>
            <person name="Gomes S.L."/>
            <person name="Gruber A."/>
            <person name="Ho P.L."/>
            <person name="Hoheisel J.D."/>
            <person name="Junqueira M.L."/>
            <person name="Kemper E.L."/>
            <person name="Kitajima J.P."/>
            <person name="Krieger J.E."/>
            <person name="Kuramae E.E."/>
            <person name="Laigret F."/>
            <person name="Lambais M.R."/>
            <person name="Leite L.C.C."/>
            <person name="Lemos E.G.M."/>
            <person name="Lemos M.V.F."/>
            <person name="Lopes S.A."/>
            <person name="Lopes C.R."/>
            <person name="Machado J.A."/>
            <person name="Machado M.A."/>
            <person name="Madeira A.M.B.N."/>
            <person name="Madeira H.M.F."/>
            <person name="Marino C.L."/>
            <person name="Marques M.V."/>
            <person name="Martins E.A.L."/>
            <person name="Martins E.M.F."/>
            <person name="Matsukuma A.Y."/>
            <person name="Menck C.F.M."/>
            <person name="Miracca E.C."/>
            <person name="Miyaki C.Y."/>
            <person name="Monteiro-Vitorello C.B."/>
            <person name="Moon D.H."/>
            <person name="Nagai M.A."/>
            <person name="Nascimento A.L.T.O."/>
            <person name="Netto L.E.S."/>
            <person name="Nhani A. Jr."/>
            <person name="Nobrega F.G."/>
            <person name="Nunes L.R."/>
            <person name="Oliveira M.A."/>
            <person name="de Oliveira M.C."/>
            <person name="de Oliveira R.C."/>
            <person name="Palmieri D.A."/>
            <person name="Paris A."/>
            <person name="Peixoto B.R."/>
            <person name="Pereira G.A.G."/>
            <person name="Pereira H.A. Jr."/>
            <person name="Pesquero J.B."/>
            <person name="Quaggio R.B."/>
            <person name="Roberto P.G."/>
            <person name="Rodrigues V."/>
            <person name="de Rosa A.J.M."/>
            <person name="de Rosa V.E. Jr."/>
            <person name="de Sa R.G."/>
            <person name="Santelli R.V."/>
            <person name="Sawasaki H.E."/>
            <person name="da Silva A.C.R."/>
            <person name="da Silva A.M."/>
            <person name="da Silva F.R."/>
            <person name="Silva W.A. Jr."/>
            <person name="da Silveira J.F."/>
            <person name="Silvestri M.L.Z."/>
            <person name="Siqueira W.J."/>
            <person name="de Souza A.A."/>
            <person name="de Souza A.P."/>
            <person name="Terenzi M.F."/>
            <person name="Truffi D."/>
            <person name="Tsai S.M."/>
            <person name="Tsuhako M.H."/>
            <person name="Vallada H."/>
            <person name="Van Sluys M.A."/>
            <person name="Verjovski-Almeida S."/>
            <person name="Vettore A.L."/>
            <person name="Zago M.A."/>
            <person name="Zatz M."/>
            <person name="Meidanis J."/>
            <person name="Setubal J.C."/>
        </authorList>
    </citation>
    <scope>NUCLEOTIDE SEQUENCE [LARGE SCALE GENOMIC DNA]</scope>
    <source>
        <strain>9a5c</strain>
    </source>
</reference>
<protein>
    <recommendedName>
        <fullName evidence="1">tRNA uridine 5-carboxymethylaminomethyl modification enzyme MnmG</fullName>
    </recommendedName>
    <alternativeName>
        <fullName evidence="1">Glucose-inhibited division protein A</fullName>
    </alternativeName>
</protein>
<proteinExistence type="inferred from homology"/>
<sequence length="629" mass="68622">MTDSFYGYDVIVIGAGHAGSEAALAAARTGAHTLLLTHNIETIGAMSCNPAIGGIGKGHLVKEIDALGGAMAHAADAAGIQWRTLNASKGPAVRATRCQADRALYRAAIRQMIEGQARLNIFQAEVDDLLFEGDTVCGAITHTGLHFKAPAVVLTAGTFLAGKIHIGPTQYAAGRMGDPPATMLAARLRERLFTVARLKTGTPPRIDGRTLNYTAMQEQPGDAPRPTMSFIGNSASHPPQVSCWITQTTERTHEIIRAALHRSPLYSGQIEGAGPRYCPSIEDKVVRFAEKNSHQIFVEPEGLNVIDIYPNGISTSLPFDVQLELVRSIRGFEQAHITRPGYAIEYDFFDPRGLKASLETKAIAGLFFAGQINGTTGYEEAAAQGLLAGLNAARHVRGLSSWTPRRDQAYLGVLVDDLITHGTNEPYRMFTSRAEYRLQLREDNADARLTAIGRDLGLIDDARWAHFNAKQEAVARECERLSAFWATPGNALGREVKETLGVTLSRETNIIDLMKRPELDYAALMRVPSLGPGVDDAQVAEQVEISVKYAGYLNRQSEEITRQQRHEATAIPLEFDYAAVRGLSTEVLQKLQHIQPQTVGQAQRIPGMTPAAISLLLVHLERMRRNRVA</sequence>
<accession>Q9PBN4</accession>
<dbReference type="EMBL" id="AE003849">
    <property type="protein sequence ID" value="AAF84905.1"/>
    <property type="molecule type" value="Genomic_DNA"/>
</dbReference>
<dbReference type="PIR" id="C82598">
    <property type="entry name" value="C82598"/>
</dbReference>
<dbReference type="RefSeq" id="WP_010894559.1">
    <property type="nucleotide sequence ID" value="NC_002488.3"/>
</dbReference>
<dbReference type="SMR" id="Q9PBN4"/>
<dbReference type="STRING" id="160492.XF_2106"/>
<dbReference type="KEGG" id="xfa:XF_2106"/>
<dbReference type="eggNOG" id="COG0445">
    <property type="taxonomic scope" value="Bacteria"/>
</dbReference>
<dbReference type="HOGENOM" id="CLU_007831_2_2_6"/>
<dbReference type="Proteomes" id="UP000000812">
    <property type="component" value="Chromosome"/>
</dbReference>
<dbReference type="GO" id="GO:0005829">
    <property type="term" value="C:cytosol"/>
    <property type="evidence" value="ECO:0007669"/>
    <property type="project" value="TreeGrafter"/>
</dbReference>
<dbReference type="GO" id="GO:0050660">
    <property type="term" value="F:flavin adenine dinucleotide binding"/>
    <property type="evidence" value="ECO:0007669"/>
    <property type="project" value="UniProtKB-UniRule"/>
</dbReference>
<dbReference type="GO" id="GO:0030488">
    <property type="term" value="P:tRNA methylation"/>
    <property type="evidence" value="ECO:0007669"/>
    <property type="project" value="TreeGrafter"/>
</dbReference>
<dbReference type="GO" id="GO:0002098">
    <property type="term" value="P:tRNA wobble uridine modification"/>
    <property type="evidence" value="ECO:0007669"/>
    <property type="project" value="InterPro"/>
</dbReference>
<dbReference type="FunFam" id="1.10.10.1800:FF:000001">
    <property type="entry name" value="tRNA uridine 5-carboxymethylaminomethyl modification enzyme MnmG"/>
    <property type="match status" value="1"/>
</dbReference>
<dbReference type="FunFam" id="1.10.150.570:FF:000001">
    <property type="entry name" value="tRNA uridine 5-carboxymethylaminomethyl modification enzyme MnmG"/>
    <property type="match status" value="1"/>
</dbReference>
<dbReference type="FunFam" id="3.50.50.60:FF:000002">
    <property type="entry name" value="tRNA uridine 5-carboxymethylaminomethyl modification enzyme MnmG"/>
    <property type="match status" value="1"/>
</dbReference>
<dbReference type="FunFam" id="3.50.50.60:FF:000010">
    <property type="entry name" value="tRNA uridine 5-carboxymethylaminomethyl modification enzyme MnmG"/>
    <property type="match status" value="1"/>
</dbReference>
<dbReference type="Gene3D" id="3.50.50.60">
    <property type="entry name" value="FAD/NAD(P)-binding domain"/>
    <property type="match status" value="2"/>
</dbReference>
<dbReference type="Gene3D" id="1.10.150.570">
    <property type="entry name" value="GidA associated domain, C-terminal subdomain"/>
    <property type="match status" value="1"/>
</dbReference>
<dbReference type="Gene3D" id="1.10.10.1800">
    <property type="entry name" value="tRNA uridine 5-carboxymethylaminomethyl modification enzyme MnmG/GidA"/>
    <property type="match status" value="1"/>
</dbReference>
<dbReference type="HAMAP" id="MF_00129">
    <property type="entry name" value="MnmG_GidA"/>
    <property type="match status" value="1"/>
</dbReference>
<dbReference type="InterPro" id="IPR036188">
    <property type="entry name" value="FAD/NAD-bd_sf"/>
</dbReference>
<dbReference type="InterPro" id="IPR049312">
    <property type="entry name" value="GIDA_C_N"/>
</dbReference>
<dbReference type="InterPro" id="IPR004416">
    <property type="entry name" value="MnmG"/>
</dbReference>
<dbReference type="InterPro" id="IPR002218">
    <property type="entry name" value="MnmG-rel"/>
</dbReference>
<dbReference type="InterPro" id="IPR020595">
    <property type="entry name" value="MnmG-rel_CS"/>
</dbReference>
<dbReference type="InterPro" id="IPR026904">
    <property type="entry name" value="MnmG_C"/>
</dbReference>
<dbReference type="InterPro" id="IPR047001">
    <property type="entry name" value="MnmG_C_subdom"/>
</dbReference>
<dbReference type="InterPro" id="IPR044920">
    <property type="entry name" value="MnmG_C_subdom_sf"/>
</dbReference>
<dbReference type="InterPro" id="IPR040131">
    <property type="entry name" value="MnmG_N"/>
</dbReference>
<dbReference type="NCBIfam" id="TIGR00136">
    <property type="entry name" value="mnmG_gidA"/>
    <property type="match status" value="1"/>
</dbReference>
<dbReference type="PANTHER" id="PTHR11806">
    <property type="entry name" value="GLUCOSE INHIBITED DIVISION PROTEIN A"/>
    <property type="match status" value="1"/>
</dbReference>
<dbReference type="PANTHER" id="PTHR11806:SF0">
    <property type="entry name" value="PROTEIN MTO1 HOMOLOG, MITOCHONDRIAL"/>
    <property type="match status" value="1"/>
</dbReference>
<dbReference type="Pfam" id="PF01134">
    <property type="entry name" value="GIDA"/>
    <property type="match status" value="1"/>
</dbReference>
<dbReference type="Pfam" id="PF21680">
    <property type="entry name" value="GIDA_C_1st"/>
    <property type="match status" value="1"/>
</dbReference>
<dbReference type="Pfam" id="PF13932">
    <property type="entry name" value="SAM_GIDA_C"/>
    <property type="match status" value="1"/>
</dbReference>
<dbReference type="SMART" id="SM01228">
    <property type="entry name" value="GIDA_assoc_3"/>
    <property type="match status" value="1"/>
</dbReference>
<dbReference type="SUPFAM" id="SSF51905">
    <property type="entry name" value="FAD/NAD(P)-binding domain"/>
    <property type="match status" value="1"/>
</dbReference>
<dbReference type="PROSITE" id="PS01280">
    <property type="entry name" value="GIDA_1"/>
    <property type="match status" value="1"/>
</dbReference>
<dbReference type="PROSITE" id="PS01281">
    <property type="entry name" value="GIDA_2"/>
    <property type="match status" value="1"/>
</dbReference>
<comment type="function">
    <text evidence="1">NAD-binding protein involved in the addition of a carboxymethylaminomethyl (cmnm) group at the wobble position (U34) of certain tRNAs, forming tRNA-cmnm(5)s(2)U34.</text>
</comment>
<comment type="cofactor">
    <cofactor evidence="1">
        <name>FAD</name>
        <dbReference type="ChEBI" id="CHEBI:57692"/>
    </cofactor>
</comment>
<comment type="subunit">
    <text evidence="1">Homodimer. Heterotetramer of two MnmE and two MnmG subunits.</text>
</comment>
<comment type="subcellular location">
    <subcellularLocation>
        <location evidence="1">Cytoplasm</location>
    </subcellularLocation>
</comment>
<comment type="similarity">
    <text evidence="1">Belongs to the MnmG family.</text>
</comment>
<feature type="chain" id="PRO_0000117221" description="tRNA uridine 5-carboxymethylaminomethyl modification enzyme MnmG">
    <location>
        <begin position="1"/>
        <end position="629"/>
    </location>
</feature>
<feature type="binding site" evidence="1">
    <location>
        <begin position="14"/>
        <end position="19"/>
    </location>
    <ligand>
        <name>FAD</name>
        <dbReference type="ChEBI" id="CHEBI:57692"/>
    </ligand>
</feature>
<feature type="binding site" evidence="1">
    <location>
        <begin position="274"/>
        <end position="288"/>
    </location>
    <ligand>
        <name>NAD(+)</name>
        <dbReference type="ChEBI" id="CHEBI:57540"/>
    </ligand>
</feature>